<reference key="1">
    <citation type="submission" date="2004-12" db="EMBL/GenBank/DDBJ databases">
        <title>The genome sequence of Borrelia hermsii and Borrelia turicatae: comparative analysis of two agents of endemic N. America relapsing fever.</title>
        <authorList>
            <person name="Porcella S.F."/>
            <person name="Raffel S.J."/>
            <person name="Schrumpf M.E."/>
            <person name="Montgomery B."/>
            <person name="Smith T."/>
            <person name="Schwan T.G."/>
        </authorList>
    </citation>
    <scope>NUCLEOTIDE SEQUENCE [LARGE SCALE GENOMIC DNA]</scope>
    <source>
        <strain>HS1 / DAH</strain>
    </source>
</reference>
<protein>
    <recommendedName>
        <fullName evidence="1">Large ribosomal subunit protein uL3</fullName>
    </recommendedName>
    <alternativeName>
        <fullName evidence="3">50S ribosomal protein L3</fullName>
    </alternativeName>
</protein>
<gene>
    <name evidence="1" type="primary">rplC</name>
    <name type="ordered locus">BH0478</name>
</gene>
<keyword id="KW-0687">Ribonucleoprotein</keyword>
<keyword id="KW-0689">Ribosomal protein</keyword>
<keyword id="KW-0694">RNA-binding</keyword>
<keyword id="KW-0699">rRNA-binding</keyword>
<organism>
    <name type="scientific">Borrelia hermsii (strain HS1 / DAH)</name>
    <dbReference type="NCBI Taxonomy" id="314723"/>
    <lineage>
        <taxon>Bacteria</taxon>
        <taxon>Pseudomonadati</taxon>
        <taxon>Spirochaetota</taxon>
        <taxon>Spirochaetia</taxon>
        <taxon>Spirochaetales</taxon>
        <taxon>Borreliaceae</taxon>
        <taxon>Borrelia</taxon>
    </lineage>
</organism>
<feature type="chain" id="PRO_1000141831" description="Large ribosomal subunit protein uL3">
    <location>
        <begin position="1"/>
        <end position="209"/>
    </location>
</feature>
<feature type="region of interest" description="Disordered" evidence="2">
    <location>
        <begin position="127"/>
        <end position="152"/>
    </location>
</feature>
<feature type="compositionally biased region" description="Polar residues" evidence="2">
    <location>
        <begin position="143"/>
        <end position="152"/>
    </location>
</feature>
<dbReference type="EMBL" id="CP000048">
    <property type="protein sequence ID" value="AAX16987.1"/>
    <property type="molecule type" value="Genomic_DNA"/>
</dbReference>
<dbReference type="RefSeq" id="WP_012422242.1">
    <property type="nucleotide sequence ID" value="NZ_CP073136.1"/>
</dbReference>
<dbReference type="SMR" id="B2S0I1"/>
<dbReference type="GeneID" id="71843296"/>
<dbReference type="KEGG" id="bhr:BH0478"/>
<dbReference type="HOGENOM" id="CLU_044142_4_1_12"/>
<dbReference type="Proteomes" id="UP000008834">
    <property type="component" value="Chromosome"/>
</dbReference>
<dbReference type="GO" id="GO:0022625">
    <property type="term" value="C:cytosolic large ribosomal subunit"/>
    <property type="evidence" value="ECO:0007669"/>
    <property type="project" value="TreeGrafter"/>
</dbReference>
<dbReference type="GO" id="GO:0019843">
    <property type="term" value="F:rRNA binding"/>
    <property type="evidence" value="ECO:0007669"/>
    <property type="project" value="UniProtKB-UniRule"/>
</dbReference>
<dbReference type="GO" id="GO:0003735">
    <property type="term" value="F:structural constituent of ribosome"/>
    <property type="evidence" value="ECO:0007669"/>
    <property type="project" value="InterPro"/>
</dbReference>
<dbReference type="GO" id="GO:0006412">
    <property type="term" value="P:translation"/>
    <property type="evidence" value="ECO:0007669"/>
    <property type="project" value="UniProtKB-UniRule"/>
</dbReference>
<dbReference type="FunFam" id="2.40.30.10:FF:000004">
    <property type="entry name" value="50S ribosomal protein L3"/>
    <property type="match status" value="1"/>
</dbReference>
<dbReference type="Gene3D" id="3.30.160.810">
    <property type="match status" value="1"/>
</dbReference>
<dbReference type="Gene3D" id="2.40.30.10">
    <property type="entry name" value="Translation factors"/>
    <property type="match status" value="1"/>
</dbReference>
<dbReference type="HAMAP" id="MF_01325_B">
    <property type="entry name" value="Ribosomal_uL3_B"/>
    <property type="match status" value="1"/>
</dbReference>
<dbReference type="InterPro" id="IPR000597">
    <property type="entry name" value="Ribosomal_uL3"/>
</dbReference>
<dbReference type="InterPro" id="IPR019927">
    <property type="entry name" value="Ribosomal_uL3_bac/org-type"/>
</dbReference>
<dbReference type="InterPro" id="IPR019926">
    <property type="entry name" value="Ribosomal_uL3_CS"/>
</dbReference>
<dbReference type="InterPro" id="IPR009000">
    <property type="entry name" value="Transl_B-barrel_sf"/>
</dbReference>
<dbReference type="NCBIfam" id="TIGR03625">
    <property type="entry name" value="L3_bact"/>
    <property type="match status" value="1"/>
</dbReference>
<dbReference type="PANTHER" id="PTHR11229">
    <property type="entry name" value="50S RIBOSOMAL PROTEIN L3"/>
    <property type="match status" value="1"/>
</dbReference>
<dbReference type="PANTHER" id="PTHR11229:SF16">
    <property type="entry name" value="LARGE RIBOSOMAL SUBUNIT PROTEIN UL3C"/>
    <property type="match status" value="1"/>
</dbReference>
<dbReference type="Pfam" id="PF00297">
    <property type="entry name" value="Ribosomal_L3"/>
    <property type="match status" value="1"/>
</dbReference>
<dbReference type="SUPFAM" id="SSF50447">
    <property type="entry name" value="Translation proteins"/>
    <property type="match status" value="1"/>
</dbReference>
<dbReference type="PROSITE" id="PS00474">
    <property type="entry name" value="RIBOSOMAL_L3"/>
    <property type="match status" value="1"/>
</dbReference>
<evidence type="ECO:0000255" key="1">
    <source>
        <dbReference type="HAMAP-Rule" id="MF_01325"/>
    </source>
</evidence>
<evidence type="ECO:0000256" key="2">
    <source>
        <dbReference type="SAM" id="MobiDB-lite"/>
    </source>
</evidence>
<evidence type="ECO:0000305" key="3"/>
<sequence>MLGLIGKKVGMTQVFQGNGVVVPVTVIEFEPNYIIGKKTVERDGYDALIMGSVDLKSSKISKPIKGQYKNLENVEPKKYVIEFKGLKGYDAGDEVGLDAFKEIKYVDITGTTKGKGFQGAMKRHNFSGGPSSHGSKFHRHLGSTGQAATPSRTFKGTKMAGRMGGEQQTIQNLEVVFIDEEKRAILVKGAVPGVKGSFVIVKKAKKVGV</sequence>
<name>RL3_BORHD</name>
<proteinExistence type="inferred from homology"/>
<accession>B2S0I1</accession>
<comment type="function">
    <text evidence="1">One of the primary rRNA binding proteins, it binds directly near the 3'-end of the 23S rRNA, where it nucleates assembly of the 50S subunit.</text>
</comment>
<comment type="subunit">
    <text evidence="1">Part of the 50S ribosomal subunit. Forms a cluster with proteins L14 and L19.</text>
</comment>
<comment type="similarity">
    <text evidence="1">Belongs to the universal ribosomal protein uL3 family.</text>
</comment>